<reference key="1">
    <citation type="submission" date="1997-10" db="EMBL/GenBank/DDBJ databases">
        <authorList>
            <person name="Woodgate R."/>
        </authorList>
    </citation>
    <scope>NUCLEOTIDE SEQUENCE [GENOMIC DNA]</scope>
</reference>
<feature type="chain" id="PRO_0000178811" description="Lipoprotein signal peptidase">
    <location>
        <begin position="1"/>
        <end position="170"/>
    </location>
</feature>
<feature type="transmembrane region" description="Helical" evidence="1">
    <location>
        <begin position="71"/>
        <end position="91"/>
    </location>
</feature>
<feature type="transmembrane region" description="Helical" evidence="1">
    <location>
        <begin position="97"/>
        <end position="116"/>
    </location>
</feature>
<feature type="transmembrane region" description="Helical" evidence="1">
    <location>
        <begin position="131"/>
        <end position="151"/>
    </location>
</feature>
<feature type="active site" evidence="1">
    <location>
        <position position="122"/>
    </location>
</feature>
<feature type="active site" evidence="1">
    <location>
        <position position="140"/>
    </location>
</feature>
<comment type="function">
    <text evidence="1">This protein specifically catalyzes the removal of signal peptides from prolipoproteins.</text>
</comment>
<comment type="catalytic activity">
    <reaction evidence="1">
        <text>Release of signal peptides from bacterial membrane prolipoproteins. Hydrolyzes -Xaa-Yaa-Zaa-|-(S,diacylglyceryl)Cys-, in which Xaa is hydrophobic (preferably Leu), and Yaa (Ala or Ser) and Zaa (Gly or Ala) have small, neutral side chains.</text>
        <dbReference type="EC" id="3.4.23.36"/>
    </reaction>
</comment>
<comment type="pathway">
    <text evidence="1">Protein modification; lipoprotein biosynthesis (signal peptide cleavage).</text>
</comment>
<comment type="subcellular location">
    <subcellularLocation>
        <location evidence="1">Cell inner membrane</location>
        <topology evidence="1">Multi-pass membrane protein</topology>
    </subcellularLocation>
</comment>
<comment type="similarity">
    <text evidence="1 2">Belongs to the peptidase A8 family.</text>
</comment>
<sequence length="170" mass="18815">MLIIGKKLSPYALLSISGLLAASDQAVKWLVQQSMAYGEYVSVTPFFNWVHLWNTGAAFSLFANGGGWQRYFFIGIAVVVSIFLIKLILENRHKGEAIAYSLILGGAMGNLIDRVFRGYVVDSFDFYWRDWHWPAFNLADIAIVLGALLFVSSSLLGKKANTNAEPDGSD</sequence>
<proteinExistence type="inferred from homology"/>
<name>LSPA_SERMA</name>
<keyword id="KW-0064">Aspartyl protease</keyword>
<keyword id="KW-0997">Cell inner membrane</keyword>
<keyword id="KW-1003">Cell membrane</keyword>
<keyword id="KW-0378">Hydrolase</keyword>
<keyword id="KW-0472">Membrane</keyword>
<keyword id="KW-0614">Plasmid</keyword>
<keyword id="KW-0645">Protease</keyword>
<keyword id="KW-0812">Transmembrane</keyword>
<keyword id="KW-1133">Transmembrane helix</keyword>
<geneLocation type="plasmid">
    <name>R471a</name>
</geneLocation>
<accession>O52213</accession>
<gene>
    <name evidence="1" type="primary">lspA</name>
</gene>
<protein>
    <recommendedName>
        <fullName evidence="1">Lipoprotein signal peptidase</fullName>
        <ecNumber evidence="1">3.4.23.36</ecNumber>
    </recommendedName>
    <alternativeName>
        <fullName evidence="1">Prolipoprotein signal peptidase</fullName>
    </alternativeName>
    <alternativeName>
        <fullName evidence="1">Signal peptidase II</fullName>
        <shortName evidence="1">SPase II</shortName>
    </alternativeName>
</protein>
<organism>
    <name type="scientific">Serratia marcescens</name>
    <dbReference type="NCBI Taxonomy" id="615"/>
    <lineage>
        <taxon>Bacteria</taxon>
        <taxon>Pseudomonadati</taxon>
        <taxon>Pseudomonadota</taxon>
        <taxon>Gammaproteobacteria</taxon>
        <taxon>Enterobacterales</taxon>
        <taxon>Yersiniaceae</taxon>
        <taxon>Serratia</taxon>
    </lineage>
</organism>
<dbReference type="EC" id="3.4.23.36" evidence="1"/>
<dbReference type="EMBL" id="AF027768">
    <property type="protein sequence ID" value="AAC82524.1"/>
    <property type="molecule type" value="Genomic_DNA"/>
</dbReference>
<dbReference type="RefSeq" id="WP_004863699.1">
    <property type="nucleotide sequence ID" value="NZ_VTEB01000238.1"/>
</dbReference>
<dbReference type="RefSeq" id="YP_006964559.1">
    <property type="nucleotide sequence ID" value="NC_019344.1"/>
</dbReference>
<dbReference type="SMR" id="O52213"/>
<dbReference type="GeneID" id="97278490"/>
<dbReference type="UniPathway" id="UPA00665"/>
<dbReference type="PRO" id="PR:O52213"/>
<dbReference type="GO" id="GO:0005886">
    <property type="term" value="C:plasma membrane"/>
    <property type="evidence" value="ECO:0007669"/>
    <property type="project" value="UniProtKB-SubCell"/>
</dbReference>
<dbReference type="GO" id="GO:0004190">
    <property type="term" value="F:aspartic-type endopeptidase activity"/>
    <property type="evidence" value="ECO:0007669"/>
    <property type="project" value="UniProtKB-UniRule"/>
</dbReference>
<dbReference type="GO" id="GO:0006508">
    <property type="term" value="P:proteolysis"/>
    <property type="evidence" value="ECO:0007669"/>
    <property type="project" value="UniProtKB-KW"/>
</dbReference>
<dbReference type="HAMAP" id="MF_00161">
    <property type="entry name" value="LspA"/>
    <property type="match status" value="1"/>
</dbReference>
<dbReference type="InterPro" id="IPR001872">
    <property type="entry name" value="Peptidase_A8"/>
</dbReference>
<dbReference type="NCBIfam" id="TIGR00077">
    <property type="entry name" value="lspA"/>
    <property type="match status" value="1"/>
</dbReference>
<dbReference type="NCBIfam" id="NF011358">
    <property type="entry name" value="PRK14776.1"/>
    <property type="match status" value="1"/>
</dbReference>
<dbReference type="PANTHER" id="PTHR33695">
    <property type="entry name" value="LIPOPROTEIN SIGNAL PEPTIDASE"/>
    <property type="match status" value="1"/>
</dbReference>
<dbReference type="PANTHER" id="PTHR33695:SF1">
    <property type="entry name" value="LIPOPROTEIN SIGNAL PEPTIDASE"/>
    <property type="match status" value="1"/>
</dbReference>
<dbReference type="Pfam" id="PF01252">
    <property type="entry name" value="Peptidase_A8"/>
    <property type="match status" value="1"/>
</dbReference>
<dbReference type="PRINTS" id="PR00781">
    <property type="entry name" value="LIPOSIGPTASE"/>
</dbReference>
<dbReference type="PROSITE" id="PS00855">
    <property type="entry name" value="SPASE_II"/>
    <property type="match status" value="1"/>
</dbReference>
<evidence type="ECO:0000255" key="1">
    <source>
        <dbReference type="HAMAP-Rule" id="MF_00161"/>
    </source>
</evidence>
<evidence type="ECO:0000305" key="2"/>